<proteinExistence type="inferred from homology"/>
<keyword id="KW-0131">Cell cycle</keyword>
<keyword id="KW-0132">Cell division</keyword>
<keyword id="KW-0997">Cell inner membrane</keyword>
<keyword id="KW-1003">Cell membrane</keyword>
<keyword id="KW-0133">Cell shape</keyword>
<keyword id="KW-0961">Cell wall biogenesis/degradation</keyword>
<keyword id="KW-0328">Glycosyltransferase</keyword>
<keyword id="KW-0472">Membrane</keyword>
<keyword id="KW-0573">Peptidoglycan synthesis</keyword>
<keyword id="KW-0808">Transferase</keyword>
<accession>B0BXF6</accession>
<feature type="chain" id="PRO_1000074466" description="UDP-N-acetylglucosamine--N-acetylmuramyl-(pentapeptide) pyrophosphoryl-undecaprenol N-acetylglucosamine transferase">
    <location>
        <begin position="1"/>
        <end position="376"/>
    </location>
</feature>
<feature type="binding site" evidence="1">
    <location>
        <begin position="11"/>
        <end position="13"/>
    </location>
    <ligand>
        <name>UDP-N-acetyl-alpha-D-glucosamine</name>
        <dbReference type="ChEBI" id="CHEBI:57705"/>
    </ligand>
</feature>
<feature type="binding site" evidence="1">
    <location>
        <position position="117"/>
    </location>
    <ligand>
        <name>UDP-N-acetyl-alpha-D-glucosamine</name>
        <dbReference type="ChEBI" id="CHEBI:57705"/>
    </ligand>
</feature>
<feature type="binding site" evidence="1">
    <location>
        <position position="160"/>
    </location>
    <ligand>
        <name>UDP-N-acetyl-alpha-D-glucosamine</name>
        <dbReference type="ChEBI" id="CHEBI:57705"/>
    </ligand>
</feature>
<feature type="binding site" evidence="1">
    <location>
        <position position="208"/>
    </location>
    <ligand>
        <name>UDP-N-acetyl-alpha-D-glucosamine</name>
        <dbReference type="ChEBI" id="CHEBI:57705"/>
    </ligand>
</feature>
<feature type="binding site" evidence="1">
    <location>
        <position position="310"/>
    </location>
    <ligand>
        <name>UDP-N-acetyl-alpha-D-glucosamine</name>
        <dbReference type="ChEBI" id="CHEBI:57705"/>
    </ligand>
</feature>
<gene>
    <name evidence="1" type="primary">murG</name>
    <name type="ordered locus">RrIowa_0668</name>
</gene>
<dbReference type="EC" id="2.4.1.227" evidence="1"/>
<dbReference type="EMBL" id="CP000766">
    <property type="protein sequence ID" value="ABY72532.1"/>
    <property type="molecule type" value="Genomic_DNA"/>
</dbReference>
<dbReference type="RefSeq" id="WP_012150758.1">
    <property type="nucleotide sequence ID" value="NC_010263.3"/>
</dbReference>
<dbReference type="SMR" id="B0BXF6"/>
<dbReference type="CAZy" id="GT28">
    <property type="family name" value="Glycosyltransferase Family 28"/>
</dbReference>
<dbReference type="GeneID" id="79937317"/>
<dbReference type="KEGG" id="rrj:RrIowa_0668"/>
<dbReference type="eggNOG" id="COG0707">
    <property type="taxonomic scope" value="Bacteria"/>
</dbReference>
<dbReference type="HOGENOM" id="CLU_037404_2_1_5"/>
<dbReference type="UniPathway" id="UPA00219"/>
<dbReference type="Proteomes" id="UP000000796">
    <property type="component" value="Chromosome"/>
</dbReference>
<dbReference type="GO" id="GO:0005886">
    <property type="term" value="C:plasma membrane"/>
    <property type="evidence" value="ECO:0007669"/>
    <property type="project" value="UniProtKB-SubCell"/>
</dbReference>
<dbReference type="GO" id="GO:0051991">
    <property type="term" value="F:UDP-N-acetyl-D-glucosamine:N-acetylmuramoyl-L-alanyl-D-glutamyl-meso-2,6-diaminopimelyl-D-alanyl-D-alanine-diphosphoundecaprenol 4-beta-N-acetylglucosaminlytransferase activity"/>
    <property type="evidence" value="ECO:0007669"/>
    <property type="project" value="RHEA"/>
</dbReference>
<dbReference type="GO" id="GO:0050511">
    <property type="term" value="F:undecaprenyldiphospho-muramoylpentapeptide beta-N-acetylglucosaminyltransferase activity"/>
    <property type="evidence" value="ECO:0007669"/>
    <property type="project" value="UniProtKB-UniRule"/>
</dbReference>
<dbReference type="GO" id="GO:0005975">
    <property type="term" value="P:carbohydrate metabolic process"/>
    <property type="evidence" value="ECO:0007669"/>
    <property type="project" value="InterPro"/>
</dbReference>
<dbReference type="GO" id="GO:0051301">
    <property type="term" value="P:cell division"/>
    <property type="evidence" value="ECO:0007669"/>
    <property type="project" value="UniProtKB-KW"/>
</dbReference>
<dbReference type="GO" id="GO:0071555">
    <property type="term" value="P:cell wall organization"/>
    <property type="evidence" value="ECO:0007669"/>
    <property type="project" value="UniProtKB-KW"/>
</dbReference>
<dbReference type="GO" id="GO:0030259">
    <property type="term" value="P:lipid glycosylation"/>
    <property type="evidence" value="ECO:0007669"/>
    <property type="project" value="UniProtKB-UniRule"/>
</dbReference>
<dbReference type="GO" id="GO:0009252">
    <property type="term" value="P:peptidoglycan biosynthetic process"/>
    <property type="evidence" value="ECO:0007669"/>
    <property type="project" value="UniProtKB-UniRule"/>
</dbReference>
<dbReference type="GO" id="GO:0008360">
    <property type="term" value="P:regulation of cell shape"/>
    <property type="evidence" value="ECO:0007669"/>
    <property type="project" value="UniProtKB-KW"/>
</dbReference>
<dbReference type="CDD" id="cd03785">
    <property type="entry name" value="GT28_MurG"/>
    <property type="match status" value="1"/>
</dbReference>
<dbReference type="Gene3D" id="3.40.50.2000">
    <property type="entry name" value="Glycogen Phosphorylase B"/>
    <property type="match status" value="2"/>
</dbReference>
<dbReference type="HAMAP" id="MF_00033">
    <property type="entry name" value="MurG"/>
    <property type="match status" value="1"/>
</dbReference>
<dbReference type="InterPro" id="IPR006009">
    <property type="entry name" value="GlcNAc_MurG"/>
</dbReference>
<dbReference type="InterPro" id="IPR007235">
    <property type="entry name" value="Glyco_trans_28_C"/>
</dbReference>
<dbReference type="InterPro" id="IPR004276">
    <property type="entry name" value="GlycoTrans_28_N"/>
</dbReference>
<dbReference type="InterPro" id="IPR022439">
    <property type="entry name" value="RPE4"/>
</dbReference>
<dbReference type="NCBIfam" id="TIGR01133">
    <property type="entry name" value="murG"/>
    <property type="match status" value="1"/>
</dbReference>
<dbReference type="NCBIfam" id="TIGR03777">
    <property type="entry name" value="RPE4"/>
    <property type="match status" value="1"/>
</dbReference>
<dbReference type="PANTHER" id="PTHR21015:SF22">
    <property type="entry name" value="GLYCOSYLTRANSFERASE"/>
    <property type="match status" value="1"/>
</dbReference>
<dbReference type="PANTHER" id="PTHR21015">
    <property type="entry name" value="UDP-N-ACETYLGLUCOSAMINE--N-ACETYLMURAMYL-(PENTAPEPTIDE) PYROPHOSPHORYL-UNDECAPRENOL N-ACETYLGLUCOSAMINE TRANSFERASE 1"/>
    <property type="match status" value="1"/>
</dbReference>
<dbReference type="Pfam" id="PF04101">
    <property type="entry name" value="Glyco_tran_28_C"/>
    <property type="match status" value="1"/>
</dbReference>
<dbReference type="Pfam" id="PF03033">
    <property type="entry name" value="Glyco_transf_28"/>
    <property type="match status" value="1"/>
</dbReference>
<dbReference type="SUPFAM" id="SSF53756">
    <property type="entry name" value="UDP-Glycosyltransferase/glycogen phosphorylase"/>
    <property type="match status" value="1"/>
</dbReference>
<sequence>MKKIILVAGGTGGHFFPAVALGEELIKRGYEVHFITDLRCKQYIKQDMKVIFHILDLKRSGNIFLFLPRLSIAVLKAIKLLYNMKPSVTVGFGGYPVIAPMFAAIFLRVPIIIHEQNSYLGKVNKFFASFAKKIAISYEKIKNLPEFAKSKIVVTGGVVRENIRELKVIEMSSRGLTTGSKKSLIKALDSVVKPRHDKLFTIFIFGGSQGAKLFSELIPASIQILMQKQPSLELNIIQQAALDDQVKIKDIYSKLNITYEVAEFFDNMALQYKEADLVISRAGASTIEELTYIGLPAIFIPLPSAADNHQYYNAQLLADEKTGWCLEQNNISAGKLADKILDLISNPKILEDASQNLLKRRKEGHKLLSNLIEEVI</sequence>
<name>MURG_RICRO</name>
<reference key="1">
    <citation type="journal article" date="2008" name="Infect. Immun.">
        <title>Genomic comparison of virulent Rickettsia rickettsii Sheila Smith and avirulent Rickettsia rickettsii Iowa.</title>
        <authorList>
            <person name="Ellison D.W."/>
            <person name="Clark T.R."/>
            <person name="Sturdevant D.E."/>
            <person name="Virtaneva K."/>
            <person name="Porcella S.F."/>
            <person name="Hackstadt T."/>
        </authorList>
    </citation>
    <scope>NUCLEOTIDE SEQUENCE [LARGE SCALE GENOMIC DNA]</scope>
    <source>
        <strain>Iowa</strain>
    </source>
</reference>
<protein>
    <recommendedName>
        <fullName evidence="1">UDP-N-acetylglucosamine--N-acetylmuramyl-(pentapeptide) pyrophosphoryl-undecaprenol N-acetylglucosamine transferase</fullName>
        <ecNumber evidence="1">2.4.1.227</ecNumber>
    </recommendedName>
    <alternativeName>
        <fullName evidence="1">Undecaprenyl-PP-MurNAc-pentapeptide-UDPGlcNAc GlcNAc transferase</fullName>
    </alternativeName>
</protein>
<organism>
    <name type="scientific">Rickettsia rickettsii (strain Iowa)</name>
    <dbReference type="NCBI Taxonomy" id="452659"/>
    <lineage>
        <taxon>Bacteria</taxon>
        <taxon>Pseudomonadati</taxon>
        <taxon>Pseudomonadota</taxon>
        <taxon>Alphaproteobacteria</taxon>
        <taxon>Rickettsiales</taxon>
        <taxon>Rickettsiaceae</taxon>
        <taxon>Rickettsieae</taxon>
        <taxon>Rickettsia</taxon>
        <taxon>spotted fever group</taxon>
    </lineage>
</organism>
<comment type="function">
    <text evidence="1">Cell wall formation. Catalyzes the transfer of a GlcNAc subunit on undecaprenyl-pyrophosphoryl-MurNAc-pentapeptide (lipid intermediate I) to form undecaprenyl-pyrophosphoryl-MurNAc-(pentapeptide)GlcNAc (lipid intermediate II).</text>
</comment>
<comment type="catalytic activity">
    <reaction evidence="1">
        <text>di-trans,octa-cis-undecaprenyl diphospho-N-acetyl-alpha-D-muramoyl-L-alanyl-D-glutamyl-meso-2,6-diaminopimeloyl-D-alanyl-D-alanine + UDP-N-acetyl-alpha-D-glucosamine = di-trans,octa-cis-undecaprenyl diphospho-[N-acetyl-alpha-D-glucosaminyl-(1-&gt;4)]-N-acetyl-alpha-D-muramoyl-L-alanyl-D-glutamyl-meso-2,6-diaminopimeloyl-D-alanyl-D-alanine + UDP + H(+)</text>
        <dbReference type="Rhea" id="RHEA:31227"/>
        <dbReference type="ChEBI" id="CHEBI:15378"/>
        <dbReference type="ChEBI" id="CHEBI:57705"/>
        <dbReference type="ChEBI" id="CHEBI:58223"/>
        <dbReference type="ChEBI" id="CHEBI:61387"/>
        <dbReference type="ChEBI" id="CHEBI:61388"/>
        <dbReference type="EC" id="2.4.1.227"/>
    </reaction>
</comment>
<comment type="pathway">
    <text evidence="1">Cell wall biogenesis; peptidoglycan biosynthesis.</text>
</comment>
<comment type="subcellular location">
    <subcellularLocation>
        <location evidence="1">Cell inner membrane</location>
        <topology evidence="1">Peripheral membrane protein</topology>
        <orientation evidence="1">Cytoplasmic side</orientation>
    </subcellularLocation>
</comment>
<comment type="similarity">
    <text evidence="1">Belongs to the glycosyltransferase 28 family. MurG subfamily.</text>
</comment>
<evidence type="ECO:0000255" key="1">
    <source>
        <dbReference type="HAMAP-Rule" id="MF_00033"/>
    </source>
</evidence>